<gene>
    <name evidence="1" type="primary">acpP</name>
    <name type="ordered locus">Sde_1630</name>
</gene>
<accession>Q21K87</accession>
<protein>
    <recommendedName>
        <fullName evidence="1">Acyl carrier protein</fullName>
        <shortName evidence="1">ACP</shortName>
    </recommendedName>
</protein>
<sequence length="78" mass="8758">MSSIEERVKKIVAEQLGVKEEEVKNEASFVEDLGADSLDTVELVMALEEEFETEIPDEEAEKITTVQLAINYINENLA</sequence>
<proteinExistence type="inferred from homology"/>
<comment type="function">
    <text evidence="1">Carrier of the growing fatty acid chain in fatty acid biosynthesis.</text>
</comment>
<comment type="pathway">
    <text evidence="1">Lipid metabolism; fatty acid biosynthesis.</text>
</comment>
<comment type="subcellular location">
    <subcellularLocation>
        <location evidence="1">Cytoplasm</location>
    </subcellularLocation>
</comment>
<comment type="PTM">
    <text evidence="1">4'-phosphopantetheine is transferred from CoA to a specific serine of apo-ACP by AcpS. This modification is essential for activity because fatty acids are bound in thioester linkage to the sulfhydryl of the prosthetic group.</text>
</comment>
<comment type="similarity">
    <text evidence="1">Belongs to the acyl carrier protein (ACP) family.</text>
</comment>
<organism>
    <name type="scientific">Saccharophagus degradans (strain 2-40 / ATCC 43961 / DSM 17024)</name>
    <dbReference type="NCBI Taxonomy" id="203122"/>
    <lineage>
        <taxon>Bacteria</taxon>
        <taxon>Pseudomonadati</taxon>
        <taxon>Pseudomonadota</taxon>
        <taxon>Gammaproteobacteria</taxon>
        <taxon>Cellvibrionales</taxon>
        <taxon>Cellvibrionaceae</taxon>
        <taxon>Saccharophagus</taxon>
    </lineage>
</organism>
<dbReference type="EMBL" id="CP000282">
    <property type="protein sequence ID" value="ABD80892.1"/>
    <property type="molecule type" value="Genomic_DNA"/>
</dbReference>
<dbReference type="RefSeq" id="WP_011468112.1">
    <property type="nucleotide sequence ID" value="NC_007912.1"/>
</dbReference>
<dbReference type="SMR" id="Q21K87"/>
<dbReference type="STRING" id="203122.Sde_1630"/>
<dbReference type="GeneID" id="98613309"/>
<dbReference type="KEGG" id="sde:Sde_1630"/>
<dbReference type="eggNOG" id="COG0236">
    <property type="taxonomic scope" value="Bacteria"/>
</dbReference>
<dbReference type="HOGENOM" id="CLU_108696_5_1_6"/>
<dbReference type="OrthoDB" id="9804551at2"/>
<dbReference type="UniPathway" id="UPA00094"/>
<dbReference type="Proteomes" id="UP000001947">
    <property type="component" value="Chromosome"/>
</dbReference>
<dbReference type="GO" id="GO:0005829">
    <property type="term" value="C:cytosol"/>
    <property type="evidence" value="ECO:0007669"/>
    <property type="project" value="TreeGrafter"/>
</dbReference>
<dbReference type="GO" id="GO:0016020">
    <property type="term" value="C:membrane"/>
    <property type="evidence" value="ECO:0007669"/>
    <property type="project" value="GOC"/>
</dbReference>
<dbReference type="GO" id="GO:0000035">
    <property type="term" value="F:acyl binding"/>
    <property type="evidence" value="ECO:0007669"/>
    <property type="project" value="TreeGrafter"/>
</dbReference>
<dbReference type="GO" id="GO:0000036">
    <property type="term" value="F:acyl carrier activity"/>
    <property type="evidence" value="ECO:0007669"/>
    <property type="project" value="UniProtKB-UniRule"/>
</dbReference>
<dbReference type="GO" id="GO:0009245">
    <property type="term" value="P:lipid A biosynthetic process"/>
    <property type="evidence" value="ECO:0007669"/>
    <property type="project" value="TreeGrafter"/>
</dbReference>
<dbReference type="FunFam" id="1.10.1200.10:FF:000001">
    <property type="entry name" value="Acyl carrier protein"/>
    <property type="match status" value="1"/>
</dbReference>
<dbReference type="Gene3D" id="1.10.1200.10">
    <property type="entry name" value="ACP-like"/>
    <property type="match status" value="1"/>
</dbReference>
<dbReference type="HAMAP" id="MF_01217">
    <property type="entry name" value="Acyl_carrier"/>
    <property type="match status" value="1"/>
</dbReference>
<dbReference type="InterPro" id="IPR003231">
    <property type="entry name" value="ACP"/>
</dbReference>
<dbReference type="InterPro" id="IPR036736">
    <property type="entry name" value="ACP-like_sf"/>
</dbReference>
<dbReference type="InterPro" id="IPR009081">
    <property type="entry name" value="PP-bd_ACP"/>
</dbReference>
<dbReference type="InterPro" id="IPR006162">
    <property type="entry name" value="Ppantetheine_attach_site"/>
</dbReference>
<dbReference type="NCBIfam" id="TIGR00517">
    <property type="entry name" value="acyl_carrier"/>
    <property type="match status" value="1"/>
</dbReference>
<dbReference type="NCBIfam" id="NF002148">
    <property type="entry name" value="PRK00982.1-2"/>
    <property type="match status" value="1"/>
</dbReference>
<dbReference type="NCBIfam" id="NF002149">
    <property type="entry name" value="PRK00982.1-3"/>
    <property type="match status" value="1"/>
</dbReference>
<dbReference type="NCBIfam" id="NF002150">
    <property type="entry name" value="PRK00982.1-4"/>
    <property type="match status" value="1"/>
</dbReference>
<dbReference type="NCBIfam" id="NF002151">
    <property type="entry name" value="PRK00982.1-5"/>
    <property type="match status" value="1"/>
</dbReference>
<dbReference type="PANTHER" id="PTHR20863">
    <property type="entry name" value="ACYL CARRIER PROTEIN"/>
    <property type="match status" value="1"/>
</dbReference>
<dbReference type="PANTHER" id="PTHR20863:SF76">
    <property type="entry name" value="CARRIER DOMAIN-CONTAINING PROTEIN"/>
    <property type="match status" value="1"/>
</dbReference>
<dbReference type="Pfam" id="PF00550">
    <property type="entry name" value="PP-binding"/>
    <property type="match status" value="1"/>
</dbReference>
<dbReference type="SUPFAM" id="SSF47336">
    <property type="entry name" value="ACP-like"/>
    <property type="match status" value="1"/>
</dbReference>
<dbReference type="PROSITE" id="PS50075">
    <property type="entry name" value="CARRIER"/>
    <property type="match status" value="1"/>
</dbReference>
<dbReference type="PROSITE" id="PS00012">
    <property type="entry name" value="PHOSPHOPANTETHEINE"/>
    <property type="match status" value="1"/>
</dbReference>
<name>ACP_SACD2</name>
<feature type="chain" id="PRO_1000066685" description="Acyl carrier protein">
    <location>
        <begin position="1"/>
        <end position="78"/>
    </location>
</feature>
<feature type="domain" description="Carrier" evidence="2">
    <location>
        <begin position="2"/>
        <end position="77"/>
    </location>
</feature>
<feature type="modified residue" description="O-(pantetheine 4'-phosphoryl)serine" evidence="2">
    <location>
        <position position="37"/>
    </location>
</feature>
<reference key="1">
    <citation type="journal article" date="2008" name="PLoS Genet.">
        <title>Complete genome sequence of the complex carbohydrate-degrading marine bacterium, Saccharophagus degradans strain 2-40 T.</title>
        <authorList>
            <person name="Weiner R.M."/>
            <person name="Taylor L.E. II"/>
            <person name="Henrissat B."/>
            <person name="Hauser L."/>
            <person name="Land M."/>
            <person name="Coutinho P.M."/>
            <person name="Rancurel C."/>
            <person name="Saunders E.H."/>
            <person name="Longmire A.G."/>
            <person name="Zhang H."/>
            <person name="Bayer E.A."/>
            <person name="Gilbert H.J."/>
            <person name="Larimer F."/>
            <person name="Zhulin I.B."/>
            <person name="Ekborg N.A."/>
            <person name="Lamed R."/>
            <person name="Richardson P.M."/>
            <person name="Borovok I."/>
            <person name="Hutcheson S."/>
        </authorList>
    </citation>
    <scope>NUCLEOTIDE SEQUENCE [LARGE SCALE GENOMIC DNA]</scope>
    <source>
        <strain>2-40 / ATCC 43961 / DSM 17024</strain>
    </source>
</reference>
<keyword id="KW-0963">Cytoplasm</keyword>
<keyword id="KW-0275">Fatty acid biosynthesis</keyword>
<keyword id="KW-0276">Fatty acid metabolism</keyword>
<keyword id="KW-0444">Lipid biosynthesis</keyword>
<keyword id="KW-0443">Lipid metabolism</keyword>
<keyword id="KW-0596">Phosphopantetheine</keyword>
<keyword id="KW-0597">Phosphoprotein</keyword>
<keyword id="KW-1185">Reference proteome</keyword>
<evidence type="ECO:0000255" key="1">
    <source>
        <dbReference type="HAMAP-Rule" id="MF_01217"/>
    </source>
</evidence>
<evidence type="ECO:0000255" key="2">
    <source>
        <dbReference type="PROSITE-ProRule" id="PRU00258"/>
    </source>
</evidence>